<comment type="function">
    <text evidence="1">Quinone reductase that provides resistance to thiol-specific stress caused by electrophilic quinones.</text>
</comment>
<comment type="function">
    <text evidence="1">Also exhibits azoreductase activity. Catalyzes the reductive cleavage of the azo bond in aromatic azo compounds to the corresponding amines.</text>
</comment>
<comment type="catalytic activity">
    <reaction evidence="1">
        <text>2 a quinone + NADH + H(+) = 2 a 1,4-benzosemiquinone + NAD(+)</text>
        <dbReference type="Rhea" id="RHEA:65952"/>
        <dbReference type="ChEBI" id="CHEBI:15378"/>
        <dbReference type="ChEBI" id="CHEBI:57540"/>
        <dbReference type="ChEBI" id="CHEBI:57945"/>
        <dbReference type="ChEBI" id="CHEBI:132124"/>
        <dbReference type="ChEBI" id="CHEBI:134225"/>
    </reaction>
</comment>
<comment type="catalytic activity">
    <reaction evidence="1">
        <text>N,N-dimethyl-1,4-phenylenediamine + anthranilate + 2 NAD(+) = 2-(4-dimethylaminophenyl)diazenylbenzoate + 2 NADH + 2 H(+)</text>
        <dbReference type="Rhea" id="RHEA:55872"/>
        <dbReference type="ChEBI" id="CHEBI:15378"/>
        <dbReference type="ChEBI" id="CHEBI:15783"/>
        <dbReference type="ChEBI" id="CHEBI:16567"/>
        <dbReference type="ChEBI" id="CHEBI:57540"/>
        <dbReference type="ChEBI" id="CHEBI:57945"/>
        <dbReference type="ChEBI" id="CHEBI:71579"/>
        <dbReference type="EC" id="1.7.1.17"/>
    </reaction>
</comment>
<comment type="cofactor">
    <cofactor evidence="1">
        <name>FMN</name>
        <dbReference type="ChEBI" id="CHEBI:58210"/>
    </cofactor>
    <text evidence="1">Binds 1 FMN per subunit.</text>
</comment>
<comment type="subunit">
    <text evidence="1">Homodimer.</text>
</comment>
<comment type="similarity">
    <text evidence="1">Belongs to the azoreductase type 1 family.</text>
</comment>
<keyword id="KW-0285">Flavoprotein</keyword>
<keyword id="KW-0288">FMN</keyword>
<keyword id="KW-0520">NAD</keyword>
<keyword id="KW-0560">Oxidoreductase</keyword>
<dbReference type="EC" id="1.6.5.-" evidence="1"/>
<dbReference type="EC" id="1.7.1.17" evidence="1"/>
<dbReference type="EMBL" id="CP000083">
    <property type="protein sequence ID" value="AAZ24015.1"/>
    <property type="molecule type" value="Genomic_DNA"/>
</dbReference>
<dbReference type="RefSeq" id="WP_011043761.1">
    <property type="nucleotide sequence ID" value="NC_003910.7"/>
</dbReference>
<dbReference type="SMR" id="Q47ZU7"/>
<dbReference type="STRING" id="167879.CPS_2972"/>
<dbReference type="KEGG" id="cps:CPS_2972"/>
<dbReference type="HOGENOM" id="CLU_088964_0_3_6"/>
<dbReference type="Proteomes" id="UP000000547">
    <property type="component" value="Chromosome"/>
</dbReference>
<dbReference type="GO" id="GO:0009055">
    <property type="term" value="F:electron transfer activity"/>
    <property type="evidence" value="ECO:0007669"/>
    <property type="project" value="UniProtKB-UniRule"/>
</dbReference>
<dbReference type="GO" id="GO:0010181">
    <property type="term" value="F:FMN binding"/>
    <property type="evidence" value="ECO:0007669"/>
    <property type="project" value="UniProtKB-UniRule"/>
</dbReference>
<dbReference type="GO" id="GO:0016652">
    <property type="term" value="F:oxidoreductase activity, acting on NAD(P)H as acceptor"/>
    <property type="evidence" value="ECO:0007669"/>
    <property type="project" value="UniProtKB-UniRule"/>
</dbReference>
<dbReference type="GO" id="GO:0016655">
    <property type="term" value="F:oxidoreductase activity, acting on NAD(P)H, quinone or similar compound as acceptor"/>
    <property type="evidence" value="ECO:0007669"/>
    <property type="project" value="InterPro"/>
</dbReference>
<dbReference type="Gene3D" id="3.40.50.360">
    <property type="match status" value="1"/>
</dbReference>
<dbReference type="HAMAP" id="MF_01216">
    <property type="entry name" value="Azoreductase_type1"/>
    <property type="match status" value="1"/>
</dbReference>
<dbReference type="InterPro" id="IPR003680">
    <property type="entry name" value="Flavodoxin_fold"/>
</dbReference>
<dbReference type="InterPro" id="IPR029039">
    <property type="entry name" value="Flavoprotein-like_sf"/>
</dbReference>
<dbReference type="InterPro" id="IPR050104">
    <property type="entry name" value="FMN-dep_NADH:Q_OxRdtase_AzoR1"/>
</dbReference>
<dbReference type="InterPro" id="IPR023048">
    <property type="entry name" value="NADH:quinone_OxRdtase_FMN_depd"/>
</dbReference>
<dbReference type="PANTHER" id="PTHR43741">
    <property type="entry name" value="FMN-DEPENDENT NADH-AZOREDUCTASE 1"/>
    <property type="match status" value="1"/>
</dbReference>
<dbReference type="PANTHER" id="PTHR43741:SF4">
    <property type="entry name" value="FMN-DEPENDENT NADH:QUINONE OXIDOREDUCTASE"/>
    <property type="match status" value="1"/>
</dbReference>
<dbReference type="Pfam" id="PF02525">
    <property type="entry name" value="Flavodoxin_2"/>
    <property type="match status" value="1"/>
</dbReference>
<dbReference type="SUPFAM" id="SSF52218">
    <property type="entry name" value="Flavoproteins"/>
    <property type="match status" value="1"/>
</dbReference>
<gene>
    <name evidence="1" type="primary">azoR2</name>
    <name type="ordered locus">CPS_2972</name>
</gene>
<evidence type="ECO:0000255" key="1">
    <source>
        <dbReference type="HAMAP-Rule" id="MF_01216"/>
    </source>
</evidence>
<reference key="1">
    <citation type="journal article" date="2005" name="Proc. Natl. Acad. Sci. U.S.A.">
        <title>The psychrophilic lifestyle as revealed by the genome sequence of Colwellia psychrerythraea 34H through genomic and proteomic analyses.</title>
        <authorList>
            <person name="Methe B.A."/>
            <person name="Nelson K.E."/>
            <person name="Deming J.W."/>
            <person name="Momen B."/>
            <person name="Melamud E."/>
            <person name="Zhang X."/>
            <person name="Moult J."/>
            <person name="Madupu R."/>
            <person name="Nelson W.C."/>
            <person name="Dodson R.J."/>
            <person name="Brinkac L.M."/>
            <person name="Daugherty S.C."/>
            <person name="Durkin A.S."/>
            <person name="DeBoy R.T."/>
            <person name="Kolonay J.F."/>
            <person name="Sullivan S.A."/>
            <person name="Zhou L."/>
            <person name="Davidsen T.M."/>
            <person name="Wu M."/>
            <person name="Huston A.L."/>
            <person name="Lewis M."/>
            <person name="Weaver B."/>
            <person name="Weidman J.F."/>
            <person name="Khouri H."/>
            <person name="Utterback T.R."/>
            <person name="Feldblyum T.V."/>
            <person name="Fraser C.M."/>
        </authorList>
    </citation>
    <scope>NUCLEOTIDE SEQUENCE [LARGE SCALE GENOMIC DNA]</scope>
    <source>
        <strain>34H / ATCC BAA-681</strain>
    </source>
</reference>
<name>AZOR2_COLP3</name>
<accession>Q47ZU7</accession>
<sequence>MITLLHIDTSARRTDNDVKEYNSISKSLAAHFMDKWITLNSKDKVIYRDLGLNPPDFISQDWIAAVFTPDEKQSEEQKSLLTLSDTLIDEVDQADIIVISSPMYNYGMPAVLKAWFDQVVRINKTFTFDLARGDFPIEPIMSGKKLILISSSGEFGFEIGGIREKMNYLAPHVETASKYLGVEEFYEIKSEYQEFADARHEESLSNAYRGVEELVKQLV</sequence>
<proteinExistence type="inferred from homology"/>
<protein>
    <recommendedName>
        <fullName evidence="1">FMN-dependent NADH:quinone oxidoreductase 2</fullName>
        <ecNumber evidence="1">1.6.5.-</ecNumber>
    </recommendedName>
    <alternativeName>
        <fullName evidence="1">Azo-dye reductase 2</fullName>
    </alternativeName>
    <alternativeName>
        <fullName evidence="1">FMN-dependent NADH-azo compound oxidoreductase 2</fullName>
    </alternativeName>
    <alternativeName>
        <fullName evidence="1">FMN-dependent NADH-azoreductase 2</fullName>
        <ecNumber evidence="1">1.7.1.17</ecNumber>
    </alternativeName>
</protein>
<organism>
    <name type="scientific">Colwellia psychrerythraea (strain 34H / ATCC BAA-681)</name>
    <name type="common">Vibrio psychroerythus</name>
    <dbReference type="NCBI Taxonomy" id="167879"/>
    <lineage>
        <taxon>Bacteria</taxon>
        <taxon>Pseudomonadati</taxon>
        <taxon>Pseudomonadota</taxon>
        <taxon>Gammaproteobacteria</taxon>
        <taxon>Alteromonadales</taxon>
        <taxon>Colwelliaceae</taxon>
        <taxon>Colwellia</taxon>
    </lineage>
</organism>
<feature type="chain" id="PRO_0000245913" description="FMN-dependent NADH:quinone oxidoreductase 2">
    <location>
        <begin position="1"/>
        <end position="219"/>
    </location>
</feature>
<feature type="binding site" evidence="1">
    <location>
        <position position="10"/>
    </location>
    <ligand>
        <name>FMN</name>
        <dbReference type="ChEBI" id="CHEBI:58210"/>
    </ligand>
</feature>
<feature type="binding site" evidence="1">
    <location>
        <begin position="23"/>
        <end position="25"/>
    </location>
    <ligand>
        <name>FMN</name>
        <dbReference type="ChEBI" id="CHEBI:58210"/>
    </ligand>
</feature>